<proteinExistence type="inferred from homology"/>
<organism>
    <name type="scientific">Afipia carboxidovorans (strain ATCC 49405 / DSM 1227 / KCTC 32145 / OM5)</name>
    <name type="common">Oligotropha carboxidovorans</name>
    <dbReference type="NCBI Taxonomy" id="504832"/>
    <lineage>
        <taxon>Bacteria</taxon>
        <taxon>Pseudomonadati</taxon>
        <taxon>Pseudomonadota</taxon>
        <taxon>Alphaproteobacteria</taxon>
        <taxon>Hyphomicrobiales</taxon>
        <taxon>Nitrobacteraceae</taxon>
        <taxon>Afipia</taxon>
    </lineage>
</organism>
<comment type="function">
    <text evidence="1">Specifically dimethylates two adjacent adenosines (A1518 and A1519) in the loop of a conserved hairpin near the 3'-end of 16S rRNA in the 30S particle. May play a critical role in biogenesis of 30S subunits.</text>
</comment>
<comment type="catalytic activity">
    <reaction evidence="1">
        <text>adenosine(1518)/adenosine(1519) in 16S rRNA + 4 S-adenosyl-L-methionine = N(6)-dimethyladenosine(1518)/N(6)-dimethyladenosine(1519) in 16S rRNA + 4 S-adenosyl-L-homocysteine + 4 H(+)</text>
        <dbReference type="Rhea" id="RHEA:19609"/>
        <dbReference type="Rhea" id="RHEA-COMP:10232"/>
        <dbReference type="Rhea" id="RHEA-COMP:10233"/>
        <dbReference type="ChEBI" id="CHEBI:15378"/>
        <dbReference type="ChEBI" id="CHEBI:57856"/>
        <dbReference type="ChEBI" id="CHEBI:59789"/>
        <dbReference type="ChEBI" id="CHEBI:74411"/>
        <dbReference type="ChEBI" id="CHEBI:74493"/>
        <dbReference type="EC" id="2.1.1.182"/>
    </reaction>
</comment>
<comment type="subcellular location">
    <subcellularLocation>
        <location evidence="1">Cytoplasm</location>
    </subcellularLocation>
</comment>
<comment type="similarity">
    <text evidence="1">Belongs to the class I-like SAM-binding methyltransferase superfamily. rRNA adenine N(6)-methyltransferase family. RsmA subfamily.</text>
</comment>
<dbReference type="EC" id="2.1.1.182" evidence="1"/>
<dbReference type="EMBL" id="CP001196">
    <property type="protein sequence ID" value="ACI93471.1"/>
    <property type="molecule type" value="Genomic_DNA"/>
</dbReference>
<dbReference type="EMBL" id="CP002826">
    <property type="protein sequence ID" value="AEI06399.1"/>
    <property type="molecule type" value="Genomic_DNA"/>
</dbReference>
<dbReference type="RefSeq" id="WP_012563497.1">
    <property type="nucleotide sequence ID" value="NC_015684.1"/>
</dbReference>
<dbReference type="SMR" id="B6JGM4"/>
<dbReference type="STRING" id="504832.OCA5_c16850"/>
<dbReference type="KEGG" id="oca:OCAR_6358"/>
<dbReference type="KEGG" id="ocg:OCA5_c16850"/>
<dbReference type="PATRIC" id="fig|504832.7.peg.1798"/>
<dbReference type="eggNOG" id="COG0030">
    <property type="taxonomic scope" value="Bacteria"/>
</dbReference>
<dbReference type="HOGENOM" id="CLU_041220_0_1_5"/>
<dbReference type="OrthoDB" id="9814755at2"/>
<dbReference type="Proteomes" id="UP000007730">
    <property type="component" value="Chromosome"/>
</dbReference>
<dbReference type="GO" id="GO:0005829">
    <property type="term" value="C:cytosol"/>
    <property type="evidence" value="ECO:0007669"/>
    <property type="project" value="TreeGrafter"/>
</dbReference>
<dbReference type="GO" id="GO:0052908">
    <property type="term" value="F:16S rRNA (adenine(1518)-N(6)/adenine(1519)-N(6))-dimethyltransferase activity"/>
    <property type="evidence" value="ECO:0007669"/>
    <property type="project" value="UniProtKB-EC"/>
</dbReference>
<dbReference type="GO" id="GO:0003723">
    <property type="term" value="F:RNA binding"/>
    <property type="evidence" value="ECO:0007669"/>
    <property type="project" value="UniProtKB-KW"/>
</dbReference>
<dbReference type="CDD" id="cd02440">
    <property type="entry name" value="AdoMet_MTases"/>
    <property type="match status" value="1"/>
</dbReference>
<dbReference type="FunFam" id="1.10.8.100:FF:000001">
    <property type="entry name" value="Ribosomal RNA small subunit methyltransferase A"/>
    <property type="match status" value="1"/>
</dbReference>
<dbReference type="Gene3D" id="1.10.8.100">
    <property type="entry name" value="Ribosomal RNA adenine dimethylase-like, domain 2"/>
    <property type="match status" value="1"/>
</dbReference>
<dbReference type="Gene3D" id="3.40.50.150">
    <property type="entry name" value="Vaccinia Virus protein VP39"/>
    <property type="match status" value="1"/>
</dbReference>
<dbReference type="HAMAP" id="MF_00607">
    <property type="entry name" value="16SrRNA_methyltr_A"/>
    <property type="match status" value="1"/>
</dbReference>
<dbReference type="InterPro" id="IPR001737">
    <property type="entry name" value="KsgA/Erm"/>
</dbReference>
<dbReference type="InterPro" id="IPR023165">
    <property type="entry name" value="rRNA_Ade_diMease-like_C"/>
</dbReference>
<dbReference type="InterPro" id="IPR020596">
    <property type="entry name" value="rRNA_Ade_Mease_Trfase_CS"/>
</dbReference>
<dbReference type="InterPro" id="IPR020598">
    <property type="entry name" value="rRNA_Ade_methylase_Trfase_N"/>
</dbReference>
<dbReference type="InterPro" id="IPR011530">
    <property type="entry name" value="rRNA_adenine_dimethylase"/>
</dbReference>
<dbReference type="InterPro" id="IPR029063">
    <property type="entry name" value="SAM-dependent_MTases_sf"/>
</dbReference>
<dbReference type="NCBIfam" id="TIGR00755">
    <property type="entry name" value="ksgA"/>
    <property type="match status" value="1"/>
</dbReference>
<dbReference type="PANTHER" id="PTHR11727">
    <property type="entry name" value="DIMETHYLADENOSINE TRANSFERASE"/>
    <property type="match status" value="1"/>
</dbReference>
<dbReference type="PANTHER" id="PTHR11727:SF7">
    <property type="entry name" value="DIMETHYLADENOSINE TRANSFERASE-RELATED"/>
    <property type="match status" value="1"/>
</dbReference>
<dbReference type="Pfam" id="PF00398">
    <property type="entry name" value="RrnaAD"/>
    <property type="match status" value="1"/>
</dbReference>
<dbReference type="SMART" id="SM00650">
    <property type="entry name" value="rADc"/>
    <property type="match status" value="1"/>
</dbReference>
<dbReference type="SUPFAM" id="SSF53335">
    <property type="entry name" value="S-adenosyl-L-methionine-dependent methyltransferases"/>
    <property type="match status" value="1"/>
</dbReference>
<dbReference type="PROSITE" id="PS01131">
    <property type="entry name" value="RRNA_A_DIMETH"/>
    <property type="match status" value="1"/>
</dbReference>
<dbReference type="PROSITE" id="PS51689">
    <property type="entry name" value="SAM_RNA_A_N6_MT"/>
    <property type="match status" value="1"/>
</dbReference>
<feature type="chain" id="PRO_1000130302" description="Ribosomal RNA small subunit methyltransferase A">
    <location>
        <begin position="1"/>
        <end position="282"/>
    </location>
</feature>
<feature type="binding site" evidence="1">
    <location>
        <position position="28"/>
    </location>
    <ligand>
        <name>S-adenosyl-L-methionine</name>
        <dbReference type="ChEBI" id="CHEBI:59789"/>
    </ligand>
</feature>
<feature type="binding site" evidence="1">
    <location>
        <position position="30"/>
    </location>
    <ligand>
        <name>S-adenosyl-L-methionine</name>
        <dbReference type="ChEBI" id="CHEBI:59789"/>
    </ligand>
</feature>
<feature type="binding site" evidence="1">
    <location>
        <position position="55"/>
    </location>
    <ligand>
        <name>S-adenosyl-L-methionine</name>
        <dbReference type="ChEBI" id="CHEBI:59789"/>
    </ligand>
</feature>
<feature type="binding site" evidence="1">
    <location>
        <position position="77"/>
    </location>
    <ligand>
        <name>S-adenosyl-L-methionine</name>
        <dbReference type="ChEBI" id="CHEBI:59789"/>
    </ligand>
</feature>
<feature type="binding site" evidence="1">
    <location>
        <position position="103"/>
    </location>
    <ligand>
        <name>S-adenosyl-L-methionine</name>
        <dbReference type="ChEBI" id="CHEBI:59789"/>
    </ligand>
</feature>
<feature type="binding site" evidence="1">
    <location>
        <position position="123"/>
    </location>
    <ligand>
        <name>S-adenosyl-L-methionine</name>
        <dbReference type="ChEBI" id="CHEBI:59789"/>
    </ligand>
</feature>
<gene>
    <name evidence="1" type="primary">rsmA</name>
    <name evidence="1" type="synonym">ksgA</name>
    <name type="ordered locus">OCAR_6358</name>
    <name type="ordered locus">OCA5_c16850</name>
</gene>
<sequence length="282" mass="30937">MSQIDDLPPLREVIRKYDLFARKSLGQNFLFDLNLTARIARAAGPLDDVTVIEIGPGPGGLTRALLATGAKRVIAVERDERAIPALEEIARRYPGRLEIIHGDATTFDPTPLLQGERARIVANLPYNIATLLLTGWLSVEPWPPWFDMMVLMFQREVAERIVATENDEAYGRLGVLANWRAETKILFDIAPGAFVPPPKVMSSVVRLAPRAAPLACSRRALEQVTAAAFNQRRKMLRQSLKALGVDPAALAEAAGVDPTRRAETVSIAGFVAMANRLIELKA</sequence>
<reference key="1">
    <citation type="journal article" date="2008" name="J. Bacteriol.">
        <title>Genome sequence of the chemolithoautotrophic bacterium Oligotropha carboxidovorans OM5T.</title>
        <authorList>
            <person name="Paul D."/>
            <person name="Bridges S."/>
            <person name="Burgess S.C."/>
            <person name="Dandass Y."/>
            <person name="Lawrence M.L."/>
        </authorList>
    </citation>
    <scope>NUCLEOTIDE SEQUENCE [LARGE SCALE GENOMIC DNA]</scope>
    <source>
        <strain>ATCC 49405 / DSM 1227 / KCTC 32145 / OM5</strain>
    </source>
</reference>
<reference key="2">
    <citation type="journal article" date="2011" name="J. Bacteriol.">
        <title>Complete genome sequences of the chemolithoautotrophic Oligotropha carboxidovorans strains OM4 and OM5.</title>
        <authorList>
            <person name="Volland S."/>
            <person name="Rachinger M."/>
            <person name="Strittmatter A."/>
            <person name="Daniel R."/>
            <person name="Gottschalk G."/>
            <person name="Meyer O."/>
        </authorList>
    </citation>
    <scope>NUCLEOTIDE SEQUENCE [LARGE SCALE GENOMIC DNA]</scope>
    <source>
        <strain>ATCC 49405 / DSM 1227 / KCTC 32145 / OM5</strain>
    </source>
</reference>
<evidence type="ECO:0000255" key="1">
    <source>
        <dbReference type="HAMAP-Rule" id="MF_00607"/>
    </source>
</evidence>
<accession>B6JGM4</accession>
<accession>F8BRL9</accession>
<keyword id="KW-0963">Cytoplasm</keyword>
<keyword id="KW-0489">Methyltransferase</keyword>
<keyword id="KW-1185">Reference proteome</keyword>
<keyword id="KW-0694">RNA-binding</keyword>
<keyword id="KW-0698">rRNA processing</keyword>
<keyword id="KW-0949">S-adenosyl-L-methionine</keyword>
<keyword id="KW-0808">Transferase</keyword>
<name>RSMA_AFIC5</name>
<protein>
    <recommendedName>
        <fullName evidence="1">Ribosomal RNA small subunit methyltransferase A</fullName>
        <ecNumber evidence="1">2.1.1.182</ecNumber>
    </recommendedName>
    <alternativeName>
        <fullName evidence="1">16S rRNA (adenine(1518)-N(6)/adenine(1519)-N(6))-dimethyltransferase</fullName>
    </alternativeName>
    <alternativeName>
        <fullName evidence="1">16S rRNA dimethyladenosine transferase</fullName>
    </alternativeName>
    <alternativeName>
        <fullName evidence="1">16S rRNA dimethylase</fullName>
    </alternativeName>
    <alternativeName>
        <fullName evidence="1">S-adenosylmethionine-6-N', N'-adenosyl(rRNA) dimethyltransferase</fullName>
    </alternativeName>
</protein>